<gene>
    <name evidence="1" type="primary">ezrA</name>
    <name type="ordered locus">lp_2328</name>
</gene>
<reference key="1">
    <citation type="journal article" date="2003" name="Proc. Natl. Acad. Sci. U.S.A.">
        <title>Complete genome sequence of Lactobacillus plantarum WCFS1.</title>
        <authorList>
            <person name="Kleerebezem M."/>
            <person name="Boekhorst J."/>
            <person name="van Kranenburg R."/>
            <person name="Molenaar D."/>
            <person name="Kuipers O.P."/>
            <person name="Leer R."/>
            <person name="Tarchini R."/>
            <person name="Peters S.A."/>
            <person name="Sandbrink H.M."/>
            <person name="Fiers M.W.E.J."/>
            <person name="Stiekema W."/>
            <person name="Klein Lankhorst R.M."/>
            <person name="Bron P.A."/>
            <person name="Hoffer S.M."/>
            <person name="Nierop Groot M.N."/>
            <person name="Kerkhoven R."/>
            <person name="De Vries M."/>
            <person name="Ursing B."/>
            <person name="De Vos W.M."/>
            <person name="Siezen R.J."/>
        </authorList>
    </citation>
    <scope>NUCLEOTIDE SEQUENCE [LARGE SCALE GENOMIC DNA]</scope>
    <source>
        <strain>ATCC BAA-793 / NCIMB 8826 / WCFS1</strain>
    </source>
</reference>
<reference key="2">
    <citation type="journal article" date="2012" name="J. Bacteriol.">
        <title>Complete resequencing and reannotation of the Lactobacillus plantarum WCFS1 genome.</title>
        <authorList>
            <person name="Siezen R.J."/>
            <person name="Francke C."/>
            <person name="Renckens B."/>
            <person name="Boekhorst J."/>
            <person name="Wels M."/>
            <person name="Kleerebezem M."/>
            <person name="van Hijum S.A."/>
        </authorList>
    </citation>
    <scope>NUCLEOTIDE SEQUENCE [LARGE SCALE GENOMIC DNA]</scope>
    <scope>GENOME REANNOTATION</scope>
    <source>
        <strain>ATCC BAA-793 / NCIMB 8826 / WCFS1</strain>
    </source>
</reference>
<dbReference type="EMBL" id="AL935263">
    <property type="protein sequence ID" value="CCC79523.1"/>
    <property type="molecule type" value="Genomic_DNA"/>
</dbReference>
<dbReference type="RefSeq" id="WP_003641477.1">
    <property type="nucleotide sequence ID" value="NC_004567.2"/>
</dbReference>
<dbReference type="RefSeq" id="YP_004890037.1">
    <property type="nucleotide sequence ID" value="NC_004567.2"/>
</dbReference>
<dbReference type="SMR" id="Q88UX2"/>
<dbReference type="STRING" id="220668.lp_2328"/>
<dbReference type="EnsemblBacteria" id="CCC79523">
    <property type="protein sequence ID" value="CCC79523"/>
    <property type="gene ID" value="lp_2328"/>
</dbReference>
<dbReference type="GeneID" id="77215705"/>
<dbReference type="KEGG" id="lpl:lp_2328"/>
<dbReference type="PATRIC" id="fig|220668.9.peg.1968"/>
<dbReference type="eggNOG" id="COG4477">
    <property type="taxonomic scope" value="Bacteria"/>
</dbReference>
<dbReference type="HOGENOM" id="CLU_034079_2_0_9"/>
<dbReference type="OrthoDB" id="1654473at2"/>
<dbReference type="PhylomeDB" id="Q88UX2"/>
<dbReference type="Proteomes" id="UP000000432">
    <property type="component" value="Chromosome"/>
</dbReference>
<dbReference type="GO" id="GO:0005886">
    <property type="term" value="C:plasma membrane"/>
    <property type="evidence" value="ECO:0007669"/>
    <property type="project" value="UniProtKB-SubCell"/>
</dbReference>
<dbReference type="GO" id="GO:0005940">
    <property type="term" value="C:septin ring"/>
    <property type="evidence" value="ECO:0007669"/>
    <property type="project" value="InterPro"/>
</dbReference>
<dbReference type="GO" id="GO:0000917">
    <property type="term" value="P:division septum assembly"/>
    <property type="evidence" value="ECO:0007669"/>
    <property type="project" value="UniProtKB-KW"/>
</dbReference>
<dbReference type="GO" id="GO:0000921">
    <property type="term" value="P:septin ring assembly"/>
    <property type="evidence" value="ECO:0007669"/>
    <property type="project" value="InterPro"/>
</dbReference>
<dbReference type="HAMAP" id="MF_00728">
    <property type="entry name" value="EzrA"/>
    <property type="match status" value="1"/>
</dbReference>
<dbReference type="InterPro" id="IPR010379">
    <property type="entry name" value="EzrA"/>
</dbReference>
<dbReference type="NCBIfam" id="NF003409">
    <property type="entry name" value="PRK04778.1-3"/>
    <property type="match status" value="1"/>
</dbReference>
<dbReference type="Pfam" id="PF06160">
    <property type="entry name" value="EzrA"/>
    <property type="match status" value="1"/>
</dbReference>
<keyword id="KW-0131">Cell cycle</keyword>
<keyword id="KW-0132">Cell division</keyword>
<keyword id="KW-1003">Cell membrane</keyword>
<keyword id="KW-0175">Coiled coil</keyword>
<keyword id="KW-0472">Membrane</keyword>
<keyword id="KW-1185">Reference proteome</keyword>
<keyword id="KW-0717">Septation</keyword>
<keyword id="KW-0812">Transmembrane</keyword>
<keyword id="KW-1133">Transmembrane helix</keyword>
<name>EZRA_LACPL</name>
<sequence>MQVAIGIVVVAIVIYAAVKGFQFYIDKQVRQLTERQQALVKQSQTTDFEKIEQLGLTGGSLAKLEALQSAGQEVDNDQLPAVSEQLTAITSQARGIRFLDAQQNLKKVAATLDTIEQRQAEIRQGLQALDDADAAHRQAVASLEKKYQNIRKTLLSQNFSFGPSIDKLEDQLANLESDFDHFSELAKAGDHDAAEKVLDQLHHDTGTLEMDIDRIPPIYKDLVSGFPDQLAELASGYQQLTAQHFHFEVESIEPEIKALQQAIDDNIALLGDLKVTDAENGNHAIEKRIDHLYDVMQAEIDAKAVVDQQQEEISKFLTHAMNQNHRLQIELDRLAQSYTLNNGEVERTRELNEQLKNIEAVYQADVTAITSKQAVFSEIAAHFAEQDEQLKGIEEEQVAINKGVASLTAEESKAHETLQRFDFEIHAIKRQVENLNLPGLPKDYLDYFKVVAKEIERLDHDINKLVINMDDITKQLIVIQADMATLKEKTSDLTDAAVMAEQLLQYANRYKTNHEEVQEASVEAQRLFTETHDYARSLEVIATAVDKVDPGSYKRIEDSYYANKQADKMNDEA</sequence>
<evidence type="ECO:0000255" key="1">
    <source>
        <dbReference type="HAMAP-Rule" id="MF_00728"/>
    </source>
</evidence>
<accession>Q88UX2</accession>
<accession>F9UQN4</accession>
<feature type="chain" id="PRO_0000172873" description="Septation ring formation regulator EzrA">
    <location>
        <begin position="1"/>
        <end position="573"/>
    </location>
</feature>
<feature type="topological domain" description="Extracellular" evidence="1">
    <location>
        <begin position="1"/>
        <end position="2"/>
    </location>
</feature>
<feature type="transmembrane region" description="Helical" evidence="1">
    <location>
        <begin position="3"/>
        <end position="21"/>
    </location>
</feature>
<feature type="topological domain" description="Cytoplasmic" evidence="1">
    <location>
        <begin position="22"/>
        <end position="573"/>
    </location>
</feature>
<feature type="coiled-coil region" evidence="1">
    <location>
        <begin position="100"/>
        <end position="188"/>
    </location>
</feature>
<feature type="coiled-coil region" evidence="1">
    <location>
        <begin position="317"/>
        <end position="364"/>
    </location>
</feature>
<feature type="coiled-coil region" evidence="1">
    <location>
        <begin position="416"/>
        <end position="488"/>
    </location>
</feature>
<proteinExistence type="inferred from homology"/>
<comment type="function">
    <text evidence="1">Negative regulator of FtsZ ring formation; modulates the frequency and position of FtsZ ring formation. Inhibits FtsZ ring formation at polar sites. Interacts either with FtsZ or with one of its binding partners to promote depolymerization.</text>
</comment>
<comment type="subcellular location">
    <subcellularLocation>
        <location>Cell membrane</location>
        <topology>Single-pass membrane protein</topology>
    </subcellularLocation>
    <text evidence="1">Colocalized with FtsZ to the nascent septal site.</text>
</comment>
<comment type="similarity">
    <text evidence="1">Belongs to the EzrA family.</text>
</comment>
<protein>
    <recommendedName>
        <fullName evidence="1">Septation ring formation regulator EzrA</fullName>
    </recommendedName>
</protein>
<organism>
    <name type="scientific">Lactiplantibacillus plantarum (strain ATCC BAA-793 / NCIMB 8826 / WCFS1)</name>
    <name type="common">Lactobacillus plantarum</name>
    <dbReference type="NCBI Taxonomy" id="220668"/>
    <lineage>
        <taxon>Bacteria</taxon>
        <taxon>Bacillati</taxon>
        <taxon>Bacillota</taxon>
        <taxon>Bacilli</taxon>
        <taxon>Lactobacillales</taxon>
        <taxon>Lactobacillaceae</taxon>
        <taxon>Lactiplantibacillus</taxon>
    </lineage>
</organism>